<reference key="1">
    <citation type="journal article" date="1996" name="Hum. Mol. Genet.">
        <title>The toxic milk mouse is a murine model of Wilson disease.</title>
        <authorList>
            <person name="Theophilos M.B."/>
            <person name="Cox D.W."/>
            <person name="Mercer J.F.B."/>
        </authorList>
    </citation>
    <scope>NUCLEOTIDE SEQUENCE [MRNA]</scope>
    <scope>INVOLVEMENT IN TX PHENOTYPE</scope>
    <source>
        <strain>DAT</strain>
        <tissue>Liver</tissue>
    </source>
</reference>
<reference key="2">
    <citation type="journal article" date="2009" name="PLoS Biol.">
        <title>Lineage-specific biology revealed by a finished genome assembly of the mouse.</title>
        <authorList>
            <person name="Church D.M."/>
            <person name="Goodstadt L."/>
            <person name="Hillier L.W."/>
            <person name="Zody M.C."/>
            <person name="Goldstein S."/>
            <person name="She X."/>
            <person name="Bult C.J."/>
            <person name="Agarwala R."/>
            <person name="Cherry J.L."/>
            <person name="DiCuccio M."/>
            <person name="Hlavina W."/>
            <person name="Kapustin Y."/>
            <person name="Meric P."/>
            <person name="Maglott D."/>
            <person name="Birtle Z."/>
            <person name="Marques A.C."/>
            <person name="Graves T."/>
            <person name="Zhou S."/>
            <person name="Teague B."/>
            <person name="Potamousis K."/>
            <person name="Churas C."/>
            <person name="Place M."/>
            <person name="Herschleb J."/>
            <person name="Runnheim R."/>
            <person name="Forrest D."/>
            <person name="Amos-Landgraf J."/>
            <person name="Schwartz D.C."/>
            <person name="Cheng Z."/>
            <person name="Lindblad-Toh K."/>
            <person name="Eichler E.E."/>
            <person name="Ponting C.P."/>
        </authorList>
    </citation>
    <scope>NUCLEOTIDE SEQUENCE [LARGE SCALE GENOMIC DNA]</scope>
    <source>
        <strain>C57BL/6J</strain>
    </source>
</reference>
<reference key="3">
    <citation type="submission" date="2005-09" db="EMBL/GenBank/DDBJ databases">
        <authorList>
            <person name="Mural R.J."/>
            <person name="Adams M.D."/>
            <person name="Myers E.W."/>
            <person name="Smith H.O."/>
            <person name="Venter J.C."/>
        </authorList>
    </citation>
    <scope>NUCLEOTIDE SEQUENCE [LARGE SCALE GENOMIC DNA]</scope>
</reference>
<reference key="4">
    <citation type="journal article" date="2010" name="Cell">
        <title>A tissue-specific atlas of mouse protein phosphorylation and expression.</title>
        <authorList>
            <person name="Huttlin E.L."/>
            <person name="Jedrychowski M.P."/>
            <person name="Elias J.E."/>
            <person name="Goswami T."/>
            <person name="Rad R."/>
            <person name="Beausoleil S.A."/>
            <person name="Villen J."/>
            <person name="Haas W."/>
            <person name="Sowa M.E."/>
            <person name="Gygi S.P."/>
        </authorList>
    </citation>
    <scope>IDENTIFICATION BY MASS SPECTROMETRY [LARGE SCALE ANALYSIS]</scope>
    <source>
        <tissue>Liver</tissue>
    </source>
</reference>
<organism>
    <name type="scientific">Mus musculus</name>
    <name type="common">Mouse</name>
    <dbReference type="NCBI Taxonomy" id="10090"/>
    <lineage>
        <taxon>Eukaryota</taxon>
        <taxon>Metazoa</taxon>
        <taxon>Chordata</taxon>
        <taxon>Craniata</taxon>
        <taxon>Vertebrata</taxon>
        <taxon>Euteleostomi</taxon>
        <taxon>Mammalia</taxon>
        <taxon>Eutheria</taxon>
        <taxon>Euarchontoglires</taxon>
        <taxon>Glires</taxon>
        <taxon>Rodentia</taxon>
        <taxon>Myomorpha</taxon>
        <taxon>Muroidea</taxon>
        <taxon>Muridae</taxon>
        <taxon>Murinae</taxon>
        <taxon>Mus</taxon>
        <taxon>Mus</taxon>
    </lineage>
</organism>
<sequence>MDPRKNLASVGTMPEQERQVTAKEASRKILSKLALPGRPWEQSMKQSFAFDNVGYEGGLDSTSSSPAATDVVNILGMTCHSCVKSIEDRISSLKGIVNIKVSLEQGSATVRYVPSVMNLQQICLQIEDMGFEASAAEGKAASWPSRSSPAQEAVVKLRVEGMTCQSCVSSIEGKIRKLQGVVRIKVSLSNQEAVITYQPYLIQPEDLRDHICDMGFEAAIKNRTAPLRLGPIDVNKLESTNLKKETVSPVQISNHFETLGHQGSYLATLPLRIDGMHCKSCVLNIEGNIGQLPGVQNIHVSLENKTAQIQYDPSCVTPMFLQTAIEALPPGHFKVSLPDGVEENEPQSGSSQRHQEQGPGRTAVLTISGITCASSVQPIEDMLSQRKGVQQTSISLAEGTGAVLYDPSIVSLDELRTAVEDMGFEVSVNSETFTINPVRNFKSGNSVPQTMGDIAGSVQKMAPDTRGLPTHQGPGHSSETPSSPGATASQKCFVQIKGMTCASCVSNIERSLQRHAGILSVLVALMSGKAEVKYDPEIIQSPRIAQLIQDLGFEASVMEDNTVSEGDIELIITGMTCASCVHNIESKLTRTNGITYASVALATSKAHVKFDPEIVGPRDIIKIIEEIGFHASLAQRNPNAHHLDHKTEIKQWKKSFLCSLVFGIPVMGLMVYMLIPSSTPQETMVLDHNIIPGLSVLNLIFFILCTFVQFLGGWYFYVQAYKSLRHRSANMDVLIVLATTIAYAYSLVILVVAVAEKAEKSPVTFFDTPPMLFVFIALGRWLEHVAKSKTSEALAKLMSLQATEATVVTLGEDNLILREEQVPMELVQRGDVIKVVPGGKFPVDGKVLEGNTMADESLITGEAMPVTKKPGSIVIAGSINAHGSVLLKATHVGNDTTLAQIVKLVEEAQMSKAPIQQLADRFSGYFVPFIIIISTLTLVVWIVIGFVDFGVVQKYFPSPSKHISQTEVIIRFAFQTSITVLCIACPCSLGLATPTAVMVGTGVAAQNGVLIKGGKPLEMAHKIKTVMFDKTGTITHGVPRVMRFLLLADVATLPLRKVLAVVGTAEASSEHPLGVAVTKYCKEELGTETLGYSTDFQAVPGCGISCKVSNVEGILARSDLTAHPVGVGNPPTGEGAGPQTFSVLIGNREWMRRNGLTISSDISDAMTDHEMKGQTAILVAIDGVLCGMIAIADAVKPEAALAIYTLKSMGVDVALITGDNRKTARAIATQVGINKVFAEVLPSHKVAKVQELQNEGKKVAMVGDGVNDSPALAQADVGIAIGTGTDVAIEAADVVLIRNDLLDVVASIHLSKRTVRRIRVNLVLALIYNMVGIPIAAGVFMPIGIVLQPWMGSAAMAASSVSVVLSSLQLKCYRKPDLERYEAQAHGRMKPLSASQVSVHIGMDDRRRDSPRATAWDQVSYVSQVSLSSLTSDRLSRHGGAAEDGGDKWSLLLSDRDEEQCI</sequence>
<comment type="function">
    <text evidence="2">Copper ion transmembrane transporter involved in the export of copper out of the cells, such as the efflux of hepatic copper into the bile.</text>
</comment>
<comment type="catalytic activity">
    <reaction evidence="2">
        <text>Cu(+)(in) + ATP + H2O = Cu(+)(out) + ADP + phosphate + H(+)</text>
        <dbReference type="Rhea" id="RHEA:25792"/>
        <dbReference type="ChEBI" id="CHEBI:15377"/>
        <dbReference type="ChEBI" id="CHEBI:15378"/>
        <dbReference type="ChEBI" id="CHEBI:30616"/>
        <dbReference type="ChEBI" id="CHEBI:43474"/>
        <dbReference type="ChEBI" id="CHEBI:49552"/>
        <dbReference type="ChEBI" id="CHEBI:456216"/>
        <dbReference type="EC" id="7.2.2.8"/>
    </reaction>
</comment>
<comment type="subunit">
    <text evidence="2">Monomer. Interacts with COMMD1/MURR1 (By similarity). Interacts with DCTN4, in a copper-dependent manner (By similarity). Interacts with ATOX1 (By similarity). Interacts (via C-terminus) with ZBTB16/PLZF (By similarity).</text>
</comment>
<comment type="subcellular location">
    <subcellularLocation>
        <location evidence="2">Golgi apparatus</location>
        <location evidence="2">trans-Golgi network membrane</location>
        <topology evidence="4">Multi-pass membrane protein</topology>
    </subcellularLocation>
    <subcellularLocation>
        <location evidence="2">Late endosome</location>
    </subcellularLocation>
    <text evidence="2">Predominantly found in the trans-Golgi network (TGN). Not redistributed to the plasma membrane in response to elevated copper levels.</text>
</comment>
<comment type="tissue specificity">
    <text>Detected in liver and kidney.</text>
</comment>
<comment type="domain">
    <text evidence="1">Each HMA domain can bind a copper ion, they are tightly packed and closely interact with each other. Wild-type ATP7B can usually be loaded with an average 5.5 copper atoms per molecule (By similarity).</text>
</comment>
<comment type="disease">
    <text evidence="7">Defects in Atp7b are the cause of the toxic milk mouse mutant (tx) phenotype, characterized by accumulation of copper in the liver in a manner similar to that observed in patients with Wilson disease.</text>
</comment>
<comment type="similarity">
    <text evidence="8">Belongs to the cation transport ATPase (P-type) (TC 3.A.3) family. Type IB subfamily.</text>
</comment>
<keyword id="KW-0067">ATP-binding</keyword>
<keyword id="KW-0186">Copper</keyword>
<keyword id="KW-0187">Copper transport</keyword>
<keyword id="KW-0225">Disease variant</keyword>
<keyword id="KW-0967">Endosome</keyword>
<keyword id="KW-0333">Golgi apparatus</keyword>
<keyword id="KW-0406">Ion transport</keyword>
<keyword id="KW-0460">Magnesium</keyword>
<keyword id="KW-0472">Membrane</keyword>
<keyword id="KW-0479">Metal-binding</keyword>
<keyword id="KW-0547">Nucleotide-binding</keyword>
<keyword id="KW-0597">Phosphoprotein</keyword>
<keyword id="KW-1185">Reference proteome</keyword>
<keyword id="KW-0677">Repeat</keyword>
<keyword id="KW-1278">Translocase</keyword>
<keyword id="KW-0812">Transmembrane</keyword>
<keyword id="KW-1133">Transmembrane helix</keyword>
<keyword id="KW-0813">Transport</keyword>
<protein>
    <recommendedName>
        <fullName>Copper-transporting ATPase 2</fullName>
        <ecNumber evidence="2">7.2.2.8</ecNumber>
    </recommendedName>
    <alternativeName>
        <fullName>Copper pump 2</fullName>
    </alternativeName>
    <alternativeName>
        <fullName>Wilson disease-associated protein homolog</fullName>
    </alternativeName>
</protein>
<feature type="chain" id="PRO_0000046315" description="Copper-transporting ATPase 2">
    <location>
        <begin position="1"/>
        <end position="1462"/>
    </location>
</feature>
<feature type="topological domain" description="Cytoplasmic" evidence="4">
    <location>
        <begin position="1"/>
        <end position="655"/>
    </location>
</feature>
<feature type="transmembrane region" description="Helical" evidence="4">
    <location>
        <begin position="656"/>
        <end position="677"/>
    </location>
</feature>
<feature type="topological domain" description="Extracellular" evidence="4">
    <location>
        <begin position="678"/>
        <end position="699"/>
    </location>
</feature>
<feature type="transmembrane region" description="Helical" evidence="4">
    <location>
        <begin position="700"/>
        <end position="719"/>
    </location>
</feature>
<feature type="topological domain" description="Cytoplasmic" evidence="4">
    <location>
        <begin position="720"/>
        <end position="726"/>
    </location>
</feature>
<feature type="transmembrane region" description="Helical" evidence="4">
    <location>
        <begin position="727"/>
        <end position="747"/>
    </location>
</feature>
<feature type="topological domain" description="Extracellular" evidence="4">
    <location>
        <begin position="748"/>
        <end position="766"/>
    </location>
</feature>
<feature type="transmembrane region" description="Helical" evidence="4">
    <location>
        <begin position="767"/>
        <end position="787"/>
    </location>
</feature>
<feature type="topological domain" description="Cytoplasmic" evidence="4">
    <location>
        <begin position="788"/>
        <end position="921"/>
    </location>
</feature>
<feature type="transmembrane region" description="Helical" evidence="4">
    <location>
        <begin position="922"/>
        <end position="944"/>
    </location>
</feature>
<feature type="topological domain" description="Extracellular" evidence="4">
    <location>
        <begin position="945"/>
        <end position="974"/>
    </location>
</feature>
<feature type="transmembrane region" description="Helical" evidence="4">
    <location>
        <begin position="975"/>
        <end position="996"/>
    </location>
</feature>
<feature type="topological domain" description="Cytoplasmic" evidence="4">
    <location>
        <begin position="997"/>
        <end position="1319"/>
    </location>
</feature>
<feature type="transmembrane region" description="Helical" evidence="4">
    <location>
        <begin position="1320"/>
        <end position="1337"/>
    </location>
</feature>
<feature type="topological domain" description="Extracellular" evidence="4">
    <location>
        <begin position="1338"/>
        <end position="1348"/>
    </location>
</feature>
<feature type="transmembrane region" description="Helical" evidence="4">
    <location>
        <begin position="1349"/>
        <end position="1368"/>
    </location>
</feature>
<feature type="topological domain" description="Cytoplasmic" evidence="4">
    <location>
        <begin position="1369"/>
        <end position="1462"/>
    </location>
</feature>
<feature type="domain" description="HMA 1" evidence="5">
    <location>
        <begin position="68"/>
        <end position="134"/>
    </location>
</feature>
<feature type="domain" description="HMA 2" evidence="5">
    <location>
        <begin position="153"/>
        <end position="219"/>
    </location>
</feature>
<feature type="domain" description="HMA 3" evidence="5">
    <location>
        <begin position="267"/>
        <end position="333"/>
    </location>
</feature>
<feature type="domain" description="HMA 4" evidence="5">
    <location>
        <begin position="361"/>
        <end position="427"/>
    </location>
</feature>
<feature type="domain" description="HMA 5" evidence="5">
    <location>
        <begin position="490"/>
        <end position="556"/>
    </location>
</feature>
<feature type="domain" description="HMA 6" evidence="5">
    <location>
        <begin position="566"/>
        <end position="632"/>
    </location>
</feature>
<feature type="region of interest" description="Disordered" evidence="6">
    <location>
        <begin position="1"/>
        <end position="23"/>
    </location>
</feature>
<feature type="region of interest" description="Disordered" evidence="6">
    <location>
        <begin position="333"/>
        <end position="361"/>
    </location>
</feature>
<feature type="region of interest" description="Disordered" evidence="6">
    <location>
        <begin position="460"/>
        <end position="487"/>
    </location>
</feature>
<feature type="compositionally biased region" description="Polar residues" evidence="6">
    <location>
        <begin position="475"/>
        <end position="487"/>
    </location>
</feature>
<feature type="active site" description="4-aspartylphosphate intermediate" evidence="1">
    <location>
        <position position="1029"/>
    </location>
</feature>
<feature type="binding site" evidence="5">
    <location>
        <position position="79"/>
    </location>
    <ligand>
        <name>Cu(+)</name>
        <dbReference type="ChEBI" id="CHEBI:49552"/>
        <label>1</label>
    </ligand>
</feature>
<feature type="binding site" evidence="5">
    <location>
        <position position="82"/>
    </location>
    <ligand>
        <name>Cu(+)</name>
        <dbReference type="ChEBI" id="CHEBI:49552"/>
        <label>1</label>
    </ligand>
</feature>
<feature type="binding site" evidence="5">
    <location>
        <position position="164"/>
    </location>
    <ligand>
        <name>Cu(+)</name>
        <dbReference type="ChEBI" id="CHEBI:49552"/>
        <label>2</label>
    </ligand>
</feature>
<feature type="binding site" evidence="5">
    <location>
        <position position="167"/>
    </location>
    <ligand>
        <name>Cu(+)</name>
        <dbReference type="ChEBI" id="CHEBI:49552"/>
        <label>2</label>
    </ligand>
</feature>
<feature type="binding site" evidence="5">
    <location>
        <position position="278"/>
    </location>
    <ligand>
        <name>Cu(+)</name>
        <dbReference type="ChEBI" id="CHEBI:49552"/>
        <label>3</label>
    </ligand>
</feature>
<feature type="binding site" evidence="5">
    <location>
        <position position="281"/>
    </location>
    <ligand>
        <name>Cu(+)</name>
        <dbReference type="ChEBI" id="CHEBI:49552"/>
        <label>3</label>
    </ligand>
</feature>
<feature type="binding site" evidence="8">
    <location>
        <position position="372"/>
    </location>
    <ligand>
        <name>Cu(+)</name>
        <dbReference type="ChEBI" id="CHEBI:49552"/>
        <label>4</label>
    </ligand>
</feature>
<feature type="binding site" evidence="5">
    <location>
        <position position="501"/>
    </location>
    <ligand>
        <name>Cu(+)</name>
        <dbReference type="ChEBI" id="CHEBI:49552"/>
        <label>5</label>
    </ligand>
</feature>
<feature type="binding site" evidence="5">
    <location>
        <position position="504"/>
    </location>
    <ligand>
        <name>Cu(+)</name>
        <dbReference type="ChEBI" id="CHEBI:49552"/>
        <label>5</label>
    </ligand>
</feature>
<feature type="binding site" evidence="5">
    <location>
        <position position="577"/>
    </location>
    <ligand>
        <name>Cu(+)</name>
        <dbReference type="ChEBI" id="CHEBI:49552"/>
        <label>6</label>
    </ligand>
</feature>
<feature type="binding site" evidence="5">
    <location>
        <position position="580"/>
    </location>
    <ligand>
        <name>Cu(+)</name>
        <dbReference type="ChEBI" id="CHEBI:49552"/>
        <label>6</label>
    </ligand>
</feature>
<feature type="binding site">
    <location>
        <position position="1264"/>
    </location>
    <ligand>
        <name>Mg(2+)</name>
        <dbReference type="ChEBI" id="CHEBI:18420"/>
    </ligand>
</feature>
<feature type="binding site">
    <location>
        <position position="1268"/>
    </location>
    <ligand>
        <name>Mg(2+)</name>
        <dbReference type="ChEBI" id="CHEBI:18420"/>
    </ligand>
</feature>
<feature type="modified residue" description="Phosphoserine" evidence="3">
    <location>
        <position position="478"/>
    </location>
</feature>
<feature type="modified residue" description="Phosphoserine" evidence="3">
    <location>
        <position position="483"/>
    </location>
</feature>
<feature type="modified residue" description="Phosphoserine" evidence="3">
    <location>
        <position position="1395"/>
    </location>
</feature>
<feature type="modified residue" description="Phosphoserine" evidence="3">
    <location>
        <position position="1454"/>
    </location>
</feature>
<feature type="sequence variant" description="In tx mice.">
    <original>M</original>
    <variation>V</variation>
    <location>
        <position position="1356"/>
    </location>
</feature>
<feature type="sequence conflict" description="In Ref. 1; AAC52852." evidence="8" ref="1">
    <original>SA</original>
    <variation>KH</variation>
    <location>
        <begin position="107"/>
        <end position="108"/>
    </location>
</feature>
<gene>
    <name type="primary">Atp7b</name>
    <name type="synonym">Wnd</name>
</gene>
<accession>Q64446</accession>
<accession>B1AQ56</accession>
<name>ATP7B_MOUSE</name>
<evidence type="ECO:0000250" key="1"/>
<evidence type="ECO:0000250" key="2">
    <source>
        <dbReference type="UniProtKB" id="P35670"/>
    </source>
</evidence>
<evidence type="ECO:0000250" key="3">
    <source>
        <dbReference type="UniProtKB" id="Q64535"/>
    </source>
</evidence>
<evidence type="ECO:0000255" key="4"/>
<evidence type="ECO:0000255" key="5">
    <source>
        <dbReference type="PROSITE-ProRule" id="PRU00280"/>
    </source>
</evidence>
<evidence type="ECO:0000256" key="6">
    <source>
        <dbReference type="SAM" id="MobiDB-lite"/>
    </source>
</evidence>
<evidence type="ECO:0000269" key="7">
    <source>
    </source>
</evidence>
<evidence type="ECO:0000305" key="8"/>
<dbReference type="EC" id="7.2.2.8" evidence="2"/>
<dbReference type="EMBL" id="U38477">
    <property type="protein sequence ID" value="AAC52852.1"/>
    <property type="molecule type" value="mRNA"/>
</dbReference>
<dbReference type="EMBL" id="AC163439">
    <property type="status" value="NOT_ANNOTATED_CDS"/>
    <property type="molecule type" value="Genomic_DNA"/>
</dbReference>
<dbReference type="EMBL" id="AL590619">
    <property type="status" value="NOT_ANNOTATED_CDS"/>
    <property type="molecule type" value="Genomic_DNA"/>
</dbReference>
<dbReference type="EMBL" id="CH466580">
    <property type="protein sequence ID" value="EDL32910.1"/>
    <property type="molecule type" value="Genomic_DNA"/>
</dbReference>
<dbReference type="CCDS" id="CCDS22168.1"/>
<dbReference type="RefSeq" id="NP_031537.2">
    <property type="nucleotide sequence ID" value="NM_007511.3"/>
</dbReference>
<dbReference type="SMR" id="Q64446"/>
<dbReference type="BioGRID" id="198269">
    <property type="interactions" value="4"/>
</dbReference>
<dbReference type="FunCoup" id="Q64446">
    <property type="interactions" value="548"/>
</dbReference>
<dbReference type="STRING" id="10090.ENSMUSP00000006742"/>
<dbReference type="iPTMnet" id="Q64446"/>
<dbReference type="PhosphoSitePlus" id="Q64446"/>
<dbReference type="PaxDb" id="10090-ENSMUSP00000006742"/>
<dbReference type="ProteomicsDB" id="277215"/>
<dbReference type="Antibodypedia" id="2396">
    <property type="antibodies" value="523 antibodies from 37 providers"/>
</dbReference>
<dbReference type="DNASU" id="11979"/>
<dbReference type="Ensembl" id="ENSMUST00000006742.11">
    <property type="protein sequence ID" value="ENSMUSP00000006742.5"/>
    <property type="gene ID" value="ENSMUSG00000006567.12"/>
</dbReference>
<dbReference type="GeneID" id="11979"/>
<dbReference type="KEGG" id="mmu:11979"/>
<dbReference type="UCSC" id="uc009lck.1">
    <property type="organism name" value="mouse"/>
</dbReference>
<dbReference type="AGR" id="MGI:103297"/>
<dbReference type="CTD" id="540"/>
<dbReference type="MGI" id="MGI:103297">
    <property type="gene designation" value="Atp7b"/>
</dbReference>
<dbReference type="VEuPathDB" id="HostDB:ENSMUSG00000006567"/>
<dbReference type="eggNOG" id="KOG0207">
    <property type="taxonomic scope" value="Eukaryota"/>
</dbReference>
<dbReference type="GeneTree" id="ENSGT00940000155749"/>
<dbReference type="InParanoid" id="Q64446"/>
<dbReference type="OMA" id="PNSWISG"/>
<dbReference type="OrthoDB" id="432719at2759"/>
<dbReference type="PhylomeDB" id="Q64446"/>
<dbReference type="TreeFam" id="TF300460"/>
<dbReference type="BRENDA" id="7.2.2.8">
    <property type="organism ID" value="3474"/>
</dbReference>
<dbReference type="BRENDA" id="7.2.2.9">
    <property type="organism ID" value="3474"/>
</dbReference>
<dbReference type="Reactome" id="R-MMU-936837">
    <property type="pathway name" value="Ion transport by P-type ATPases"/>
</dbReference>
<dbReference type="BioGRID-ORCS" id="11979">
    <property type="hits" value="3 hits in 76 CRISPR screens"/>
</dbReference>
<dbReference type="PRO" id="PR:Q64446"/>
<dbReference type="Proteomes" id="UP000000589">
    <property type="component" value="Chromosome 8"/>
</dbReference>
<dbReference type="RNAct" id="Q64446">
    <property type="molecule type" value="protein"/>
</dbReference>
<dbReference type="Bgee" id="ENSMUSG00000006567">
    <property type="expression patterns" value="Expressed in yolk sac and 96 other cell types or tissues"/>
</dbReference>
<dbReference type="ExpressionAtlas" id="Q64446">
    <property type="expression patterns" value="baseline and differential"/>
</dbReference>
<dbReference type="GO" id="GO:0016323">
    <property type="term" value="C:basolateral plasma membrane"/>
    <property type="evidence" value="ECO:0007669"/>
    <property type="project" value="Ensembl"/>
</dbReference>
<dbReference type="GO" id="GO:0005770">
    <property type="term" value="C:late endosome"/>
    <property type="evidence" value="ECO:0000250"/>
    <property type="project" value="HGNC"/>
</dbReference>
<dbReference type="GO" id="GO:0016020">
    <property type="term" value="C:membrane"/>
    <property type="evidence" value="ECO:0000314"/>
    <property type="project" value="MGI"/>
</dbReference>
<dbReference type="GO" id="GO:0048471">
    <property type="term" value="C:perinuclear region of cytoplasm"/>
    <property type="evidence" value="ECO:0007669"/>
    <property type="project" value="Ensembl"/>
</dbReference>
<dbReference type="GO" id="GO:0005802">
    <property type="term" value="C:trans-Golgi network"/>
    <property type="evidence" value="ECO:0000314"/>
    <property type="project" value="MGI"/>
</dbReference>
<dbReference type="GO" id="GO:0032588">
    <property type="term" value="C:trans-Golgi network membrane"/>
    <property type="evidence" value="ECO:0000250"/>
    <property type="project" value="UniProtKB"/>
</dbReference>
<dbReference type="GO" id="GO:0005524">
    <property type="term" value="F:ATP binding"/>
    <property type="evidence" value="ECO:0000250"/>
    <property type="project" value="HGNC-UCL"/>
</dbReference>
<dbReference type="GO" id="GO:0016887">
    <property type="term" value="F:ATP hydrolysis activity"/>
    <property type="evidence" value="ECO:0007669"/>
    <property type="project" value="InterPro"/>
</dbReference>
<dbReference type="GO" id="GO:0005507">
    <property type="term" value="F:copper ion binding"/>
    <property type="evidence" value="ECO:0000250"/>
    <property type="project" value="HGNC-UCL"/>
</dbReference>
<dbReference type="GO" id="GO:0043682">
    <property type="term" value="F:P-type divalent copper transporter activity"/>
    <property type="evidence" value="ECO:0000314"/>
    <property type="project" value="MGI"/>
</dbReference>
<dbReference type="GO" id="GO:0140581">
    <property type="term" value="F:P-type monovalent copper transporter activity"/>
    <property type="evidence" value="ECO:0007669"/>
    <property type="project" value="UniProtKB-EC"/>
</dbReference>
<dbReference type="GO" id="GO:0015677">
    <property type="term" value="P:copper ion import"/>
    <property type="evidence" value="ECO:0007669"/>
    <property type="project" value="Ensembl"/>
</dbReference>
<dbReference type="GO" id="GO:0006825">
    <property type="term" value="P:copper ion transport"/>
    <property type="evidence" value="ECO:0000314"/>
    <property type="project" value="MGI"/>
</dbReference>
<dbReference type="GO" id="GO:0051649">
    <property type="term" value="P:establishment of localization in cell"/>
    <property type="evidence" value="ECO:0000315"/>
    <property type="project" value="MGI"/>
</dbReference>
<dbReference type="GO" id="GO:0006878">
    <property type="term" value="P:intracellular copper ion homeostasis"/>
    <property type="evidence" value="ECO:0000315"/>
    <property type="project" value="MGI"/>
</dbReference>
<dbReference type="GO" id="GO:0006882">
    <property type="term" value="P:intracellular zinc ion homeostasis"/>
    <property type="evidence" value="ECO:0000315"/>
    <property type="project" value="MGI"/>
</dbReference>
<dbReference type="GO" id="GO:0007595">
    <property type="term" value="P:lactation"/>
    <property type="evidence" value="ECO:0000315"/>
    <property type="project" value="MGI"/>
</dbReference>
<dbReference type="GO" id="GO:0051604">
    <property type="term" value="P:protein maturation"/>
    <property type="evidence" value="ECO:0000315"/>
    <property type="project" value="MGI"/>
</dbReference>
<dbReference type="GO" id="GO:0046688">
    <property type="term" value="P:response to copper ion"/>
    <property type="evidence" value="ECO:0007669"/>
    <property type="project" value="Ensembl"/>
</dbReference>
<dbReference type="GO" id="GO:0051208">
    <property type="term" value="P:sequestering of calcium ion"/>
    <property type="evidence" value="ECO:0007669"/>
    <property type="project" value="Ensembl"/>
</dbReference>
<dbReference type="CDD" id="cd00371">
    <property type="entry name" value="HMA"/>
    <property type="match status" value="6"/>
</dbReference>
<dbReference type="CDD" id="cd02094">
    <property type="entry name" value="P-type_ATPase_Cu-like"/>
    <property type="match status" value="1"/>
</dbReference>
<dbReference type="FunFam" id="3.30.70.100:FF:000001">
    <property type="entry name" value="ATPase copper transporting beta"/>
    <property type="match status" value="5"/>
</dbReference>
<dbReference type="FunFam" id="3.30.70.100:FF:000009">
    <property type="entry name" value="ATPase copper transporting beta"/>
    <property type="match status" value="1"/>
</dbReference>
<dbReference type="FunFam" id="3.40.1110.10:FF:000015">
    <property type="entry name" value="ATPase copper transporting beta"/>
    <property type="match status" value="1"/>
</dbReference>
<dbReference type="FunFam" id="3.40.50.1000:FF:000092">
    <property type="entry name" value="copper-transporting ATPase 1 isoform X2"/>
    <property type="match status" value="1"/>
</dbReference>
<dbReference type="FunFam" id="3.40.50.1000:FF:000144">
    <property type="entry name" value="copper-transporting ATPase 1 isoform X2"/>
    <property type="match status" value="1"/>
</dbReference>
<dbReference type="FunFam" id="2.70.150.10:FF:000002">
    <property type="entry name" value="Copper-transporting ATPase 1, putative"/>
    <property type="match status" value="1"/>
</dbReference>
<dbReference type="Gene3D" id="3.30.70.100">
    <property type="match status" value="6"/>
</dbReference>
<dbReference type="Gene3D" id="3.40.1110.10">
    <property type="entry name" value="Calcium-transporting ATPase, cytoplasmic domain N"/>
    <property type="match status" value="1"/>
</dbReference>
<dbReference type="Gene3D" id="2.70.150.10">
    <property type="entry name" value="Calcium-transporting ATPase, cytoplasmic transduction domain A"/>
    <property type="match status" value="1"/>
</dbReference>
<dbReference type="Gene3D" id="3.40.50.1000">
    <property type="entry name" value="HAD superfamily/HAD-like"/>
    <property type="match status" value="1"/>
</dbReference>
<dbReference type="InterPro" id="IPR023299">
    <property type="entry name" value="ATPase_P-typ_cyto_dom_N"/>
</dbReference>
<dbReference type="InterPro" id="IPR018303">
    <property type="entry name" value="ATPase_P-typ_P_site"/>
</dbReference>
<dbReference type="InterPro" id="IPR023298">
    <property type="entry name" value="ATPase_P-typ_TM_dom_sf"/>
</dbReference>
<dbReference type="InterPro" id="IPR008250">
    <property type="entry name" value="ATPase_P-typ_transduc_dom_A_sf"/>
</dbReference>
<dbReference type="InterPro" id="IPR036412">
    <property type="entry name" value="HAD-like_sf"/>
</dbReference>
<dbReference type="InterPro" id="IPR023214">
    <property type="entry name" value="HAD_sf"/>
</dbReference>
<dbReference type="InterPro" id="IPR017969">
    <property type="entry name" value="Heavy-metal-associated_CS"/>
</dbReference>
<dbReference type="InterPro" id="IPR006122">
    <property type="entry name" value="HMA_Cu_ion-bd"/>
</dbReference>
<dbReference type="InterPro" id="IPR006121">
    <property type="entry name" value="HMA_dom"/>
</dbReference>
<dbReference type="InterPro" id="IPR036163">
    <property type="entry name" value="HMA_dom_sf"/>
</dbReference>
<dbReference type="InterPro" id="IPR027256">
    <property type="entry name" value="P-typ_ATPase_IB"/>
</dbReference>
<dbReference type="InterPro" id="IPR001757">
    <property type="entry name" value="P_typ_ATPase"/>
</dbReference>
<dbReference type="InterPro" id="IPR044492">
    <property type="entry name" value="P_typ_ATPase_HD_dom"/>
</dbReference>
<dbReference type="NCBIfam" id="TIGR01525">
    <property type="entry name" value="ATPase-IB_hvy"/>
    <property type="match status" value="1"/>
</dbReference>
<dbReference type="NCBIfam" id="TIGR01494">
    <property type="entry name" value="ATPase_P-type"/>
    <property type="match status" value="2"/>
</dbReference>
<dbReference type="NCBIfam" id="TIGR00003">
    <property type="entry name" value="copper ion binding protein"/>
    <property type="match status" value="5"/>
</dbReference>
<dbReference type="PANTHER" id="PTHR46594">
    <property type="entry name" value="P-TYPE CATION-TRANSPORTING ATPASE"/>
    <property type="match status" value="1"/>
</dbReference>
<dbReference type="PANTHER" id="PTHR46594:SF4">
    <property type="entry name" value="P-TYPE CATION-TRANSPORTING ATPASE"/>
    <property type="match status" value="1"/>
</dbReference>
<dbReference type="Pfam" id="PF00122">
    <property type="entry name" value="E1-E2_ATPase"/>
    <property type="match status" value="1"/>
</dbReference>
<dbReference type="Pfam" id="PF00403">
    <property type="entry name" value="HMA"/>
    <property type="match status" value="6"/>
</dbReference>
<dbReference type="Pfam" id="PF00702">
    <property type="entry name" value="Hydrolase"/>
    <property type="match status" value="1"/>
</dbReference>
<dbReference type="PRINTS" id="PR00119">
    <property type="entry name" value="CATATPASE"/>
</dbReference>
<dbReference type="PRINTS" id="PR00942">
    <property type="entry name" value="CUATPASEI"/>
</dbReference>
<dbReference type="SFLD" id="SFLDG00002">
    <property type="entry name" value="C1.7:_P-type_atpase_like"/>
    <property type="match status" value="1"/>
</dbReference>
<dbReference type="SFLD" id="SFLDF00027">
    <property type="entry name" value="p-type_atpase"/>
    <property type="match status" value="1"/>
</dbReference>
<dbReference type="SUPFAM" id="SSF81653">
    <property type="entry name" value="Calcium ATPase, transduction domain A"/>
    <property type="match status" value="1"/>
</dbReference>
<dbReference type="SUPFAM" id="SSF81665">
    <property type="entry name" value="Calcium ATPase, transmembrane domain M"/>
    <property type="match status" value="1"/>
</dbReference>
<dbReference type="SUPFAM" id="SSF56784">
    <property type="entry name" value="HAD-like"/>
    <property type="match status" value="1"/>
</dbReference>
<dbReference type="SUPFAM" id="SSF55008">
    <property type="entry name" value="HMA, heavy metal-associated domain"/>
    <property type="match status" value="6"/>
</dbReference>
<dbReference type="PROSITE" id="PS00154">
    <property type="entry name" value="ATPASE_E1_E2"/>
    <property type="match status" value="1"/>
</dbReference>
<dbReference type="PROSITE" id="PS01047">
    <property type="entry name" value="HMA_1"/>
    <property type="match status" value="5"/>
</dbReference>
<dbReference type="PROSITE" id="PS50846">
    <property type="entry name" value="HMA_2"/>
    <property type="match status" value="6"/>
</dbReference>
<proteinExistence type="evidence at protein level"/>